<organism>
    <name type="scientific">Clostridium botulinum (strain Eklund 17B / Type B)</name>
    <dbReference type="NCBI Taxonomy" id="935198"/>
    <lineage>
        <taxon>Bacteria</taxon>
        <taxon>Bacillati</taxon>
        <taxon>Bacillota</taxon>
        <taxon>Clostridia</taxon>
        <taxon>Eubacteriales</taxon>
        <taxon>Clostridiaceae</taxon>
        <taxon>Clostridium</taxon>
    </lineage>
</organism>
<reference key="1">
    <citation type="submission" date="2008-04" db="EMBL/GenBank/DDBJ databases">
        <title>Complete sequence of Clostridium botulinum strain Eklund.</title>
        <authorList>
            <person name="Brinkac L.M."/>
            <person name="Brown J.L."/>
            <person name="Bruce D."/>
            <person name="Detter C."/>
            <person name="Munk C."/>
            <person name="Smith L.A."/>
            <person name="Smith T.J."/>
            <person name="Sutton G."/>
            <person name="Brettin T.S."/>
        </authorList>
    </citation>
    <scope>NUCLEOTIDE SEQUENCE [LARGE SCALE GENOMIC DNA]</scope>
    <source>
        <strain>Eklund 17B / Type B</strain>
    </source>
</reference>
<keyword id="KW-0067">ATP-binding</keyword>
<keyword id="KW-0418">Kinase</keyword>
<keyword id="KW-0547">Nucleotide-binding</keyword>
<keyword id="KW-0723">Serine/threonine-protein kinase</keyword>
<keyword id="KW-0749">Sporulation</keyword>
<keyword id="KW-0808">Transferase</keyword>
<protein>
    <recommendedName>
        <fullName evidence="1">Anti-sigma F factor</fullName>
        <ecNumber evidence="1">2.7.11.1</ecNumber>
    </recommendedName>
    <alternativeName>
        <fullName evidence="1">Stage II sporulation protein AB</fullName>
    </alternativeName>
</protein>
<gene>
    <name evidence="1" type="primary">spoIIAB</name>
    <name type="ordered locus">CLL_A0875</name>
</gene>
<accession>B2TLY1</accession>
<sequence>MYENKMNLEFVSKSQNEAFARVAVAAFIAQLDPTIDEISDVKTAVSEAVTNSIIHGYENKEDGVIKIEVEICDGEVTIEITDNGKGIEDIPKVMEPLYTSRPDLERSGMGFTVMETFMDGLLVESEKEKGTRVRMKKKFNILS</sequence>
<feature type="chain" id="PRO_1000130809" description="Anti-sigma F factor">
    <location>
        <begin position="1"/>
        <end position="143"/>
    </location>
</feature>
<name>SP2AB_CLOBB</name>
<proteinExistence type="inferred from homology"/>
<dbReference type="EC" id="2.7.11.1" evidence="1"/>
<dbReference type="EMBL" id="CP001056">
    <property type="protein sequence ID" value="ACD24377.1"/>
    <property type="molecule type" value="Genomic_DNA"/>
</dbReference>
<dbReference type="SMR" id="B2TLY1"/>
<dbReference type="KEGG" id="cbk:CLL_A0875"/>
<dbReference type="HOGENOM" id="CLU_090336_11_0_9"/>
<dbReference type="Proteomes" id="UP000001195">
    <property type="component" value="Chromosome"/>
</dbReference>
<dbReference type="GO" id="GO:0005524">
    <property type="term" value="F:ATP binding"/>
    <property type="evidence" value="ECO:0007669"/>
    <property type="project" value="UniProtKB-KW"/>
</dbReference>
<dbReference type="GO" id="GO:0106310">
    <property type="term" value="F:protein serine kinase activity"/>
    <property type="evidence" value="ECO:0007669"/>
    <property type="project" value="RHEA"/>
</dbReference>
<dbReference type="GO" id="GO:0004674">
    <property type="term" value="F:protein serine/threonine kinase activity"/>
    <property type="evidence" value="ECO:0007669"/>
    <property type="project" value="UniProtKB-KW"/>
</dbReference>
<dbReference type="GO" id="GO:0016989">
    <property type="term" value="F:sigma factor antagonist activity"/>
    <property type="evidence" value="ECO:0007669"/>
    <property type="project" value="InterPro"/>
</dbReference>
<dbReference type="GO" id="GO:0030436">
    <property type="term" value="P:asexual sporulation"/>
    <property type="evidence" value="ECO:0007669"/>
    <property type="project" value="UniProtKB-UniRule"/>
</dbReference>
<dbReference type="GO" id="GO:0042174">
    <property type="term" value="P:negative regulation of sporulation resulting in formation of a cellular spore"/>
    <property type="evidence" value="ECO:0007669"/>
    <property type="project" value="InterPro"/>
</dbReference>
<dbReference type="GO" id="GO:0030435">
    <property type="term" value="P:sporulation resulting in formation of a cellular spore"/>
    <property type="evidence" value="ECO:0007669"/>
    <property type="project" value="UniProtKB-KW"/>
</dbReference>
<dbReference type="Gene3D" id="3.30.565.10">
    <property type="entry name" value="Histidine kinase-like ATPase, C-terminal domain"/>
    <property type="match status" value="1"/>
</dbReference>
<dbReference type="HAMAP" id="MF_00637">
    <property type="entry name" value="Anti_sigma_F"/>
    <property type="match status" value="1"/>
</dbReference>
<dbReference type="InterPro" id="IPR050267">
    <property type="entry name" value="Anti-sigma-factor_SerPK"/>
</dbReference>
<dbReference type="InterPro" id="IPR010194">
    <property type="entry name" value="Anti-sigma_F"/>
</dbReference>
<dbReference type="InterPro" id="IPR036890">
    <property type="entry name" value="HATPase_C_sf"/>
</dbReference>
<dbReference type="NCBIfam" id="TIGR01925">
    <property type="entry name" value="spIIAB"/>
    <property type="match status" value="1"/>
</dbReference>
<dbReference type="PANTHER" id="PTHR35526:SF3">
    <property type="entry name" value="ANTI-SIGMA-F FACTOR RSBW"/>
    <property type="match status" value="1"/>
</dbReference>
<dbReference type="PANTHER" id="PTHR35526">
    <property type="entry name" value="ANTI-SIGMA-F FACTOR RSBW-RELATED"/>
    <property type="match status" value="1"/>
</dbReference>
<dbReference type="Pfam" id="PF13581">
    <property type="entry name" value="HATPase_c_2"/>
    <property type="match status" value="1"/>
</dbReference>
<dbReference type="SMART" id="SM00387">
    <property type="entry name" value="HATPase_c"/>
    <property type="match status" value="1"/>
</dbReference>
<dbReference type="SUPFAM" id="SSF55874">
    <property type="entry name" value="ATPase domain of HSP90 chaperone/DNA topoisomerase II/histidine kinase"/>
    <property type="match status" value="1"/>
</dbReference>
<evidence type="ECO:0000255" key="1">
    <source>
        <dbReference type="HAMAP-Rule" id="MF_00637"/>
    </source>
</evidence>
<comment type="function">
    <text evidence="1">Binds to sigma F and blocks its ability to form an RNA polymerase holoenzyme (E-sigma F). Phosphorylates SpoIIAA on a serine residue. This phosphorylation may enable SpoIIAA to act as an anti-anti-sigma factor that counteracts SpoIIAB and thus releases sigma F from inhibition.</text>
</comment>
<comment type="catalytic activity">
    <reaction evidence="1">
        <text>L-seryl-[protein] + ATP = O-phospho-L-seryl-[protein] + ADP + H(+)</text>
        <dbReference type="Rhea" id="RHEA:17989"/>
        <dbReference type="Rhea" id="RHEA-COMP:9863"/>
        <dbReference type="Rhea" id="RHEA-COMP:11604"/>
        <dbReference type="ChEBI" id="CHEBI:15378"/>
        <dbReference type="ChEBI" id="CHEBI:29999"/>
        <dbReference type="ChEBI" id="CHEBI:30616"/>
        <dbReference type="ChEBI" id="CHEBI:83421"/>
        <dbReference type="ChEBI" id="CHEBI:456216"/>
        <dbReference type="EC" id="2.7.11.1"/>
    </reaction>
</comment>
<comment type="catalytic activity">
    <reaction evidence="1">
        <text>L-threonyl-[protein] + ATP = O-phospho-L-threonyl-[protein] + ADP + H(+)</text>
        <dbReference type="Rhea" id="RHEA:46608"/>
        <dbReference type="Rhea" id="RHEA-COMP:11060"/>
        <dbReference type="Rhea" id="RHEA-COMP:11605"/>
        <dbReference type="ChEBI" id="CHEBI:15378"/>
        <dbReference type="ChEBI" id="CHEBI:30013"/>
        <dbReference type="ChEBI" id="CHEBI:30616"/>
        <dbReference type="ChEBI" id="CHEBI:61977"/>
        <dbReference type="ChEBI" id="CHEBI:456216"/>
        <dbReference type="EC" id="2.7.11.1"/>
    </reaction>
</comment>
<comment type="similarity">
    <text evidence="1">Belongs to the anti-sigma-factor family.</text>
</comment>